<dbReference type="EC" id="2.7.8.7" evidence="1"/>
<dbReference type="EMBL" id="CP000851">
    <property type="protein sequence ID" value="ABV86368.1"/>
    <property type="molecule type" value="Genomic_DNA"/>
</dbReference>
<dbReference type="RefSeq" id="WP_012154299.1">
    <property type="nucleotide sequence ID" value="NC_009901.1"/>
</dbReference>
<dbReference type="SMR" id="A8H1D1"/>
<dbReference type="STRING" id="398579.Spea_1041"/>
<dbReference type="KEGG" id="spl:Spea_1041"/>
<dbReference type="eggNOG" id="COG0736">
    <property type="taxonomic scope" value="Bacteria"/>
</dbReference>
<dbReference type="HOGENOM" id="CLU_089696_3_1_6"/>
<dbReference type="OrthoDB" id="517356at2"/>
<dbReference type="Proteomes" id="UP000002608">
    <property type="component" value="Chromosome"/>
</dbReference>
<dbReference type="GO" id="GO:0005737">
    <property type="term" value="C:cytoplasm"/>
    <property type="evidence" value="ECO:0007669"/>
    <property type="project" value="UniProtKB-SubCell"/>
</dbReference>
<dbReference type="GO" id="GO:0008897">
    <property type="term" value="F:holo-[acyl-carrier-protein] synthase activity"/>
    <property type="evidence" value="ECO:0007669"/>
    <property type="project" value="UniProtKB-UniRule"/>
</dbReference>
<dbReference type="GO" id="GO:0000287">
    <property type="term" value="F:magnesium ion binding"/>
    <property type="evidence" value="ECO:0007669"/>
    <property type="project" value="UniProtKB-UniRule"/>
</dbReference>
<dbReference type="GO" id="GO:0006633">
    <property type="term" value="P:fatty acid biosynthetic process"/>
    <property type="evidence" value="ECO:0007669"/>
    <property type="project" value="UniProtKB-UniRule"/>
</dbReference>
<dbReference type="FunFam" id="3.90.470.20:FF:000001">
    <property type="entry name" value="Holo-[acyl-carrier-protein] synthase"/>
    <property type="match status" value="1"/>
</dbReference>
<dbReference type="Gene3D" id="3.90.470.20">
    <property type="entry name" value="4'-phosphopantetheinyl transferase domain"/>
    <property type="match status" value="1"/>
</dbReference>
<dbReference type="HAMAP" id="MF_00101">
    <property type="entry name" value="AcpS"/>
    <property type="match status" value="1"/>
</dbReference>
<dbReference type="InterPro" id="IPR008278">
    <property type="entry name" value="4-PPantetheinyl_Trfase_dom"/>
</dbReference>
<dbReference type="InterPro" id="IPR037143">
    <property type="entry name" value="4-PPantetheinyl_Trfase_dom_sf"/>
</dbReference>
<dbReference type="InterPro" id="IPR002582">
    <property type="entry name" value="ACPS"/>
</dbReference>
<dbReference type="InterPro" id="IPR004568">
    <property type="entry name" value="Ppantetheine-prot_Trfase_dom"/>
</dbReference>
<dbReference type="NCBIfam" id="TIGR00516">
    <property type="entry name" value="acpS"/>
    <property type="match status" value="1"/>
</dbReference>
<dbReference type="NCBIfam" id="TIGR00556">
    <property type="entry name" value="pantethn_trn"/>
    <property type="match status" value="1"/>
</dbReference>
<dbReference type="Pfam" id="PF01648">
    <property type="entry name" value="ACPS"/>
    <property type="match status" value="1"/>
</dbReference>
<dbReference type="SUPFAM" id="SSF56214">
    <property type="entry name" value="4'-phosphopantetheinyl transferase"/>
    <property type="match status" value="1"/>
</dbReference>
<reference key="1">
    <citation type="submission" date="2007-10" db="EMBL/GenBank/DDBJ databases">
        <title>Complete sequence of Shewanella pealeana ATCC 700345.</title>
        <authorList>
            <consortium name="US DOE Joint Genome Institute"/>
            <person name="Copeland A."/>
            <person name="Lucas S."/>
            <person name="Lapidus A."/>
            <person name="Barry K."/>
            <person name="Glavina del Rio T."/>
            <person name="Dalin E."/>
            <person name="Tice H."/>
            <person name="Pitluck S."/>
            <person name="Chertkov O."/>
            <person name="Brettin T."/>
            <person name="Bruce D."/>
            <person name="Detter J.C."/>
            <person name="Han C."/>
            <person name="Schmutz J."/>
            <person name="Larimer F."/>
            <person name="Land M."/>
            <person name="Hauser L."/>
            <person name="Kyrpides N."/>
            <person name="Kim E."/>
            <person name="Zhao J.-S.Z."/>
            <person name="Manno D."/>
            <person name="Hawari J."/>
            <person name="Richardson P."/>
        </authorList>
    </citation>
    <scope>NUCLEOTIDE SEQUENCE [LARGE SCALE GENOMIC DNA]</scope>
    <source>
        <strain>ATCC 700345 / ANG-SQ1</strain>
    </source>
</reference>
<proteinExistence type="inferred from homology"/>
<comment type="function">
    <text evidence="1">Transfers the 4'-phosphopantetheine moiety from coenzyme A to a Ser of acyl-carrier-protein.</text>
</comment>
<comment type="catalytic activity">
    <reaction evidence="1">
        <text>apo-[ACP] + CoA = holo-[ACP] + adenosine 3',5'-bisphosphate + H(+)</text>
        <dbReference type="Rhea" id="RHEA:12068"/>
        <dbReference type="Rhea" id="RHEA-COMP:9685"/>
        <dbReference type="Rhea" id="RHEA-COMP:9690"/>
        <dbReference type="ChEBI" id="CHEBI:15378"/>
        <dbReference type="ChEBI" id="CHEBI:29999"/>
        <dbReference type="ChEBI" id="CHEBI:57287"/>
        <dbReference type="ChEBI" id="CHEBI:58343"/>
        <dbReference type="ChEBI" id="CHEBI:64479"/>
        <dbReference type="EC" id="2.7.8.7"/>
    </reaction>
</comment>
<comment type="cofactor">
    <cofactor evidence="1">
        <name>Mg(2+)</name>
        <dbReference type="ChEBI" id="CHEBI:18420"/>
    </cofactor>
</comment>
<comment type="subcellular location">
    <subcellularLocation>
        <location evidence="1">Cytoplasm</location>
    </subcellularLocation>
</comment>
<comment type="similarity">
    <text evidence="1">Belongs to the P-Pant transferase superfamily. AcpS family.</text>
</comment>
<sequence>MIVGLGTDIVEIARIESRIPAAGDEALLTCRLAKRVLTETEFALFVGSTQPARYLAKRFAAKEAAAKALGTGIGRGVSFQHIEISNNDNGAPQVVFTDGASERLSQLGGVKAHLSIADEQHYATATVILES</sequence>
<gene>
    <name evidence="1" type="primary">acpS</name>
    <name type="ordered locus">Spea_1041</name>
</gene>
<organism>
    <name type="scientific">Shewanella pealeana (strain ATCC 700345 / ANG-SQ1)</name>
    <dbReference type="NCBI Taxonomy" id="398579"/>
    <lineage>
        <taxon>Bacteria</taxon>
        <taxon>Pseudomonadati</taxon>
        <taxon>Pseudomonadota</taxon>
        <taxon>Gammaproteobacteria</taxon>
        <taxon>Alteromonadales</taxon>
        <taxon>Shewanellaceae</taxon>
        <taxon>Shewanella</taxon>
    </lineage>
</organism>
<evidence type="ECO:0000255" key="1">
    <source>
        <dbReference type="HAMAP-Rule" id="MF_00101"/>
    </source>
</evidence>
<protein>
    <recommendedName>
        <fullName evidence="1">Holo-[acyl-carrier-protein] synthase</fullName>
        <shortName evidence="1">Holo-ACP synthase</shortName>
        <ecNumber evidence="1">2.7.8.7</ecNumber>
    </recommendedName>
    <alternativeName>
        <fullName evidence="1">4'-phosphopantetheinyl transferase AcpS</fullName>
    </alternativeName>
</protein>
<keyword id="KW-0963">Cytoplasm</keyword>
<keyword id="KW-0275">Fatty acid biosynthesis</keyword>
<keyword id="KW-0276">Fatty acid metabolism</keyword>
<keyword id="KW-0444">Lipid biosynthesis</keyword>
<keyword id="KW-0443">Lipid metabolism</keyword>
<keyword id="KW-0460">Magnesium</keyword>
<keyword id="KW-0479">Metal-binding</keyword>
<keyword id="KW-1185">Reference proteome</keyword>
<keyword id="KW-0808">Transferase</keyword>
<accession>A8H1D1</accession>
<feature type="chain" id="PRO_1000075662" description="Holo-[acyl-carrier-protein] synthase">
    <location>
        <begin position="1"/>
        <end position="131"/>
    </location>
</feature>
<feature type="binding site" evidence="1">
    <location>
        <position position="8"/>
    </location>
    <ligand>
        <name>Mg(2+)</name>
        <dbReference type="ChEBI" id="CHEBI:18420"/>
    </ligand>
</feature>
<feature type="binding site" evidence="1">
    <location>
        <position position="63"/>
    </location>
    <ligand>
        <name>Mg(2+)</name>
        <dbReference type="ChEBI" id="CHEBI:18420"/>
    </ligand>
</feature>
<name>ACPS_SHEPA</name>